<protein>
    <recommendedName>
        <fullName>RNA silencing suppressor</fullName>
    </recommendedName>
    <alternativeName>
        <fullName>10.7 kDa protein</fullName>
    </alternativeName>
    <alternativeName>
        <fullName>Putative nucleic acid-binding protein</fullName>
    </alternativeName>
</protein>
<evidence type="ECO:0000255" key="1"/>
<evidence type="ECO:0000269" key="2">
    <source>
    </source>
</evidence>
<evidence type="ECO:0000305" key="3"/>
<name>VSR_PVMR</name>
<proteinExistence type="inferred from homology"/>
<accession>P17530</accession>
<comment type="function">
    <text evidence="2">Suppressor of viral-induced RNA silencing. Increases the accumulation of viral RNA and enhances viral cell-to-cell movement by inhibiting RNA silencing.</text>
</comment>
<comment type="similarity">
    <text evidence="3">Belongs to the carlaviruses nucleic acid-binding protein family.</text>
</comment>
<sequence length="108" mass="12183">MKDVTKVALLIARAMCASSGTFVFELAFSITEYTGRPLGGGRSKYARRRRAISIARCHRCYRLWPPTVFTTRCDNKHCVPGISYNVRVAQFIDEGVTEVIPSVINKRE</sequence>
<organismHost>
    <name type="scientific">Solanum tuberosum</name>
    <name type="common">Potato</name>
    <dbReference type="NCBI Taxonomy" id="4113"/>
</organismHost>
<keyword id="KW-0238">DNA-binding</keyword>
<keyword id="KW-0945">Host-virus interaction</keyword>
<keyword id="KW-1090">Inhibition of host innate immune response by virus</keyword>
<keyword id="KW-0479">Metal-binding</keyword>
<keyword id="KW-1185">Reference proteome</keyword>
<keyword id="KW-0941">Suppressor of RNA silencing</keyword>
<keyword id="KW-0899">Viral immunoevasion</keyword>
<keyword id="KW-0862">Zinc</keyword>
<keyword id="KW-0863">Zinc-finger</keyword>
<feature type="chain" id="PRO_0000222657" description="RNA silencing suppressor">
    <location>
        <begin position="1"/>
        <end position="108"/>
    </location>
</feature>
<feature type="zinc finger region" description="C4-type" evidence="1">
    <location>
        <begin position="57"/>
        <end position="78"/>
    </location>
</feature>
<feature type="region of interest" description="Basic" evidence="3">
    <location>
        <begin position="47"/>
        <end position="50"/>
    </location>
</feature>
<feature type="sequence conflict" description="In Ref. 1." evidence="3" ref="1">
    <original>PGISYNVRVAQFIDEGVTEVIPSVINKR</original>
    <variation>LVSLTMCAWRNLLMK</variation>
    <location>
        <begin position="80"/>
        <end position="107"/>
    </location>
</feature>
<organism>
    <name type="scientific">Potato virus M (strain Russian)</name>
    <name type="common">PVM</name>
    <dbReference type="NCBI Taxonomy" id="12168"/>
    <lineage>
        <taxon>Viruses</taxon>
        <taxon>Riboviria</taxon>
        <taxon>Orthornavirae</taxon>
        <taxon>Kitrinoviricota</taxon>
        <taxon>Alsuviricetes</taxon>
        <taxon>Tymovirales</taxon>
        <taxon>Betaflexiviridae</taxon>
        <taxon>Quinvirinae</taxon>
        <taxon>Carlavirus</taxon>
        <taxon>Potato virus M</taxon>
    </lineage>
</organism>
<reference key="1">
    <citation type="journal article" date="1989" name="J. Gen. Virol.">
        <title>Partial nucleotide sequence of potato virus M RNA shows similarities to protexviruses in gene arrangement and the encoded amino acid sequences.</title>
        <authorList>
            <person name="Rupasov V.V."/>
            <person name="Morozov S.Y."/>
            <person name="Kanyuka K.V."/>
            <person name="Zavriev S.K."/>
        </authorList>
    </citation>
    <scope>NUCLEOTIDE SEQUENCE [GENOMIC RNA]</scope>
</reference>
<reference key="2">
    <citation type="journal article" date="1991" name="J. Gen. Virol.">
        <title>The genome organization of potato virus M RNA.</title>
        <authorList>
            <person name="Zavriev S.K."/>
            <person name="Kanyuka K.V."/>
            <person name="Levay K.E."/>
        </authorList>
    </citation>
    <scope>NUCLEOTIDE SEQUENCE [GENOMIC RNA]</scope>
</reference>
<reference key="3">
    <citation type="journal article" date="1991" name="Mol. Biol. (Mosk.)">
        <title>Complete nucleotide sequence of genomic RNA of the potato M-virus.</title>
        <authorList>
            <person name="Zavriev S.K."/>
            <person name="Kaniuka K.V."/>
            <person name="Levai K.E."/>
        </authorList>
    </citation>
    <scope>NUCLEOTIDE SEQUENCE [GENOMIC RNA]</scope>
</reference>
<reference key="4">
    <citation type="journal article" date="2011" name="J. Virol.">
        <title>A dual strategy for the suppression of host antiviral silencing: two distinct suppressors for viral replication and viral movement encoded by potato virus M.</title>
        <authorList>
            <person name="Senshu H."/>
            <person name="Yamaji Y."/>
            <person name="Minato N."/>
            <person name="Shiraishi T."/>
            <person name="Maejima K."/>
            <person name="Hashimoto M."/>
            <person name="Miura C."/>
            <person name="Neriya Y."/>
            <person name="Namba S."/>
        </authorList>
    </citation>
    <scope>FUNCTION</scope>
</reference>
<dbReference type="EMBL" id="D14449">
    <property type="protein sequence ID" value="BAA03344.1"/>
    <property type="molecule type" value="Genomic_RNA"/>
</dbReference>
<dbReference type="PIR" id="F54333">
    <property type="entry name" value="WMVYP5"/>
</dbReference>
<dbReference type="RefSeq" id="NP_056772.1">
    <property type="nucleotide sequence ID" value="NC_001361.2"/>
</dbReference>
<dbReference type="GeneID" id="1493994"/>
<dbReference type="KEGG" id="vg:1493994"/>
<dbReference type="Proteomes" id="UP000000677">
    <property type="component" value="Segment"/>
</dbReference>
<dbReference type="GO" id="GO:0003677">
    <property type="term" value="F:DNA binding"/>
    <property type="evidence" value="ECO:0007669"/>
    <property type="project" value="UniProtKB-KW"/>
</dbReference>
<dbReference type="GO" id="GO:0008270">
    <property type="term" value="F:zinc ion binding"/>
    <property type="evidence" value="ECO:0007669"/>
    <property type="project" value="UniProtKB-KW"/>
</dbReference>
<dbReference type="GO" id="GO:0006355">
    <property type="term" value="P:regulation of DNA-templated transcription"/>
    <property type="evidence" value="ECO:0007669"/>
    <property type="project" value="InterPro"/>
</dbReference>
<dbReference type="GO" id="GO:0052170">
    <property type="term" value="P:symbiont-mediated suppression of host innate immune response"/>
    <property type="evidence" value="ECO:0007669"/>
    <property type="project" value="UniProtKB-KW"/>
</dbReference>
<dbReference type="InterPro" id="IPR002568">
    <property type="entry name" value="Carla-bd"/>
</dbReference>
<dbReference type="Pfam" id="PF01623">
    <property type="entry name" value="Carla_C4"/>
    <property type="match status" value="1"/>
</dbReference>